<protein>
    <recommendedName>
        <fullName evidence="1">Enolase</fullName>
        <ecNumber evidence="1">4.2.1.11</ecNumber>
    </recommendedName>
    <alternativeName>
        <fullName evidence="1">2-phospho-D-glycerate hydro-lyase</fullName>
    </alternativeName>
    <alternativeName>
        <fullName evidence="1">2-phosphoglycerate dehydratase</fullName>
    </alternativeName>
</protein>
<name>ENO_BACTN</name>
<feature type="chain" id="PRO_0000133842" description="Enolase">
    <location>
        <begin position="1"/>
        <end position="426"/>
    </location>
</feature>
<feature type="active site" description="Proton donor" evidence="1">
    <location>
        <position position="204"/>
    </location>
</feature>
<feature type="active site" description="Proton acceptor" evidence="1">
    <location>
        <position position="340"/>
    </location>
</feature>
<feature type="binding site" evidence="1">
    <location>
        <position position="162"/>
    </location>
    <ligand>
        <name>(2R)-2-phosphoglycerate</name>
        <dbReference type="ChEBI" id="CHEBI:58289"/>
    </ligand>
</feature>
<feature type="binding site" evidence="1">
    <location>
        <position position="241"/>
    </location>
    <ligand>
        <name>Mg(2+)</name>
        <dbReference type="ChEBI" id="CHEBI:18420"/>
    </ligand>
</feature>
<feature type="binding site" evidence="1">
    <location>
        <position position="288"/>
    </location>
    <ligand>
        <name>Mg(2+)</name>
        <dbReference type="ChEBI" id="CHEBI:18420"/>
    </ligand>
</feature>
<feature type="binding site" evidence="1">
    <location>
        <position position="315"/>
    </location>
    <ligand>
        <name>Mg(2+)</name>
        <dbReference type="ChEBI" id="CHEBI:18420"/>
    </ligand>
</feature>
<feature type="binding site" evidence="1">
    <location>
        <position position="340"/>
    </location>
    <ligand>
        <name>(2R)-2-phosphoglycerate</name>
        <dbReference type="ChEBI" id="CHEBI:58289"/>
    </ligand>
</feature>
<feature type="binding site" evidence="1">
    <location>
        <position position="369"/>
    </location>
    <ligand>
        <name>(2R)-2-phosphoglycerate</name>
        <dbReference type="ChEBI" id="CHEBI:58289"/>
    </ligand>
</feature>
<feature type="binding site" evidence="1">
    <location>
        <position position="370"/>
    </location>
    <ligand>
        <name>(2R)-2-phosphoglycerate</name>
        <dbReference type="ChEBI" id="CHEBI:58289"/>
    </ligand>
</feature>
<feature type="binding site" evidence="1">
    <location>
        <position position="391"/>
    </location>
    <ligand>
        <name>(2R)-2-phosphoglycerate</name>
        <dbReference type="ChEBI" id="CHEBI:58289"/>
    </ligand>
</feature>
<keyword id="KW-0963">Cytoplasm</keyword>
<keyword id="KW-0324">Glycolysis</keyword>
<keyword id="KW-0456">Lyase</keyword>
<keyword id="KW-0460">Magnesium</keyword>
<keyword id="KW-0479">Metal-binding</keyword>
<keyword id="KW-1185">Reference proteome</keyword>
<keyword id="KW-0964">Secreted</keyword>
<accession>Q89Z05</accession>
<gene>
    <name evidence="1" type="primary">eno</name>
    <name type="ordered locus">BT_4572</name>
</gene>
<proteinExistence type="inferred from homology"/>
<dbReference type="EC" id="4.2.1.11" evidence="1"/>
<dbReference type="EMBL" id="AE015928">
    <property type="protein sequence ID" value="AAO79677.1"/>
    <property type="molecule type" value="Genomic_DNA"/>
</dbReference>
<dbReference type="RefSeq" id="NP_813483.1">
    <property type="nucleotide sequence ID" value="NC_004663.1"/>
</dbReference>
<dbReference type="RefSeq" id="WP_008760327.1">
    <property type="nucleotide sequence ID" value="NC_004663.1"/>
</dbReference>
<dbReference type="SMR" id="Q89Z05"/>
<dbReference type="FunCoup" id="Q89Z05">
    <property type="interactions" value="488"/>
</dbReference>
<dbReference type="STRING" id="226186.BT_4572"/>
<dbReference type="PaxDb" id="226186-BT_4572"/>
<dbReference type="EnsemblBacteria" id="AAO79677">
    <property type="protein sequence ID" value="AAO79677"/>
    <property type="gene ID" value="BT_4572"/>
</dbReference>
<dbReference type="GeneID" id="60925747"/>
<dbReference type="KEGG" id="bth:BT_4572"/>
<dbReference type="PATRIC" id="fig|226186.12.peg.4653"/>
<dbReference type="eggNOG" id="COG0148">
    <property type="taxonomic scope" value="Bacteria"/>
</dbReference>
<dbReference type="HOGENOM" id="CLU_031223_2_1_10"/>
<dbReference type="InParanoid" id="Q89Z05"/>
<dbReference type="OrthoDB" id="9804716at2"/>
<dbReference type="UniPathway" id="UPA00109">
    <property type="reaction ID" value="UER00187"/>
</dbReference>
<dbReference type="Proteomes" id="UP000001414">
    <property type="component" value="Chromosome"/>
</dbReference>
<dbReference type="GO" id="GO:0009986">
    <property type="term" value="C:cell surface"/>
    <property type="evidence" value="ECO:0007669"/>
    <property type="project" value="UniProtKB-SubCell"/>
</dbReference>
<dbReference type="GO" id="GO:0005576">
    <property type="term" value="C:extracellular region"/>
    <property type="evidence" value="ECO:0007669"/>
    <property type="project" value="UniProtKB-SubCell"/>
</dbReference>
<dbReference type="GO" id="GO:0000015">
    <property type="term" value="C:phosphopyruvate hydratase complex"/>
    <property type="evidence" value="ECO:0000318"/>
    <property type="project" value="GO_Central"/>
</dbReference>
<dbReference type="GO" id="GO:0000287">
    <property type="term" value="F:magnesium ion binding"/>
    <property type="evidence" value="ECO:0007669"/>
    <property type="project" value="UniProtKB-UniRule"/>
</dbReference>
<dbReference type="GO" id="GO:0004634">
    <property type="term" value="F:phosphopyruvate hydratase activity"/>
    <property type="evidence" value="ECO:0000318"/>
    <property type="project" value="GO_Central"/>
</dbReference>
<dbReference type="GO" id="GO:0006096">
    <property type="term" value="P:glycolytic process"/>
    <property type="evidence" value="ECO:0000318"/>
    <property type="project" value="GO_Central"/>
</dbReference>
<dbReference type="CDD" id="cd03313">
    <property type="entry name" value="enolase"/>
    <property type="match status" value="1"/>
</dbReference>
<dbReference type="FunFam" id="3.20.20.120:FF:000001">
    <property type="entry name" value="Enolase"/>
    <property type="match status" value="1"/>
</dbReference>
<dbReference type="FunFam" id="3.30.390.10:FF:000001">
    <property type="entry name" value="Enolase"/>
    <property type="match status" value="1"/>
</dbReference>
<dbReference type="Gene3D" id="3.20.20.120">
    <property type="entry name" value="Enolase-like C-terminal domain"/>
    <property type="match status" value="1"/>
</dbReference>
<dbReference type="Gene3D" id="3.30.390.10">
    <property type="entry name" value="Enolase-like, N-terminal domain"/>
    <property type="match status" value="1"/>
</dbReference>
<dbReference type="HAMAP" id="MF_00318">
    <property type="entry name" value="Enolase"/>
    <property type="match status" value="1"/>
</dbReference>
<dbReference type="InterPro" id="IPR000941">
    <property type="entry name" value="Enolase"/>
</dbReference>
<dbReference type="InterPro" id="IPR036849">
    <property type="entry name" value="Enolase-like_C_sf"/>
</dbReference>
<dbReference type="InterPro" id="IPR029017">
    <property type="entry name" value="Enolase-like_N"/>
</dbReference>
<dbReference type="InterPro" id="IPR020810">
    <property type="entry name" value="Enolase_C"/>
</dbReference>
<dbReference type="InterPro" id="IPR020809">
    <property type="entry name" value="Enolase_CS"/>
</dbReference>
<dbReference type="InterPro" id="IPR020811">
    <property type="entry name" value="Enolase_N"/>
</dbReference>
<dbReference type="NCBIfam" id="TIGR01060">
    <property type="entry name" value="eno"/>
    <property type="match status" value="1"/>
</dbReference>
<dbReference type="PANTHER" id="PTHR11902">
    <property type="entry name" value="ENOLASE"/>
    <property type="match status" value="1"/>
</dbReference>
<dbReference type="PANTHER" id="PTHR11902:SF1">
    <property type="entry name" value="ENOLASE"/>
    <property type="match status" value="1"/>
</dbReference>
<dbReference type="Pfam" id="PF00113">
    <property type="entry name" value="Enolase_C"/>
    <property type="match status" value="1"/>
</dbReference>
<dbReference type="Pfam" id="PF03952">
    <property type="entry name" value="Enolase_N"/>
    <property type="match status" value="1"/>
</dbReference>
<dbReference type="PIRSF" id="PIRSF001400">
    <property type="entry name" value="Enolase"/>
    <property type="match status" value="1"/>
</dbReference>
<dbReference type="PRINTS" id="PR00148">
    <property type="entry name" value="ENOLASE"/>
</dbReference>
<dbReference type="SFLD" id="SFLDS00001">
    <property type="entry name" value="Enolase"/>
    <property type="match status" value="1"/>
</dbReference>
<dbReference type="SFLD" id="SFLDF00002">
    <property type="entry name" value="enolase"/>
    <property type="match status" value="1"/>
</dbReference>
<dbReference type="SMART" id="SM01192">
    <property type="entry name" value="Enolase_C"/>
    <property type="match status" value="1"/>
</dbReference>
<dbReference type="SMART" id="SM01193">
    <property type="entry name" value="Enolase_N"/>
    <property type="match status" value="1"/>
</dbReference>
<dbReference type="SUPFAM" id="SSF51604">
    <property type="entry name" value="Enolase C-terminal domain-like"/>
    <property type="match status" value="1"/>
</dbReference>
<dbReference type="SUPFAM" id="SSF54826">
    <property type="entry name" value="Enolase N-terminal domain-like"/>
    <property type="match status" value="1"/>
</dbReference>
<dbReference type="PROSITE" id="PS00164">
    <property type="entry name" value="ENOLASE"/>
    <property type="match status" value="1"/>
</dbReference>
<reference key="1">
    <citation type="journal article" date="2003" name="Science">
        <title>A genomic view of the human-Bacteroides thetaiotaomicron symbiosis.</title>
        <authorList>
            <person name="Xu J."/>
            <person name="Bjursell M.K."/>
            <person name="Himrod J."/>
            <person name="Deng S."/>
            <person name="Carmichael L.K."/>
            <person name="Chiang H.C."/>
            <person name="Hooper L.V."/>
            <person name="Gordon J.I."/>
        </authorList>
    </citation>
    <scope>NUCLEOTIDE SEQUENCE [LARGE SCALE GENOMIC DNA]</scope>
    <source>
        <strain>ATCC 29148 / DSM 2079 / JCM 5827 / CCUG 10774 / NCTC 10582 / VPI-5482 / E50</strain>
    </source>
</reference>
<sequence length="426" mass="46158">MKIEKIVAREILDSRGNPTVEVDVVLESGIMGRASVPSGASTGEHEALELRDGDKQRYGGKGVQKAVDNVNKIIAPKLIGMSSLNQRGIDYAMLALDGTKTKSNLGANAILGVSLAVAKAAASYLDLPLYRYIGGTNTYVMPVPMMNIINGGSHSDAPIAFQEFMIRPVGAPSFREGLRMGAEVFHALKKVLKDRGLSTAVGDEGGFAPNLEGTEDALNSIIAAIKAAGYEPGKDVMIGMDCASSEFYHDGIYDYTKFEGAKGKKRTAEEQIDYLEELINKFPIDSIEDGMSENDWEGWKKLTERIGDRCQLVGDDLFVTNVDFLAMGIEKGCANSILIKVNQIGSLTETLNAIEMAHRHGYTTVTSHRSGETEDATIADIAVATNSGQIKTGSLSRSDRMAKYNQLLRIEEELGDLAVYGYKRIK</sequence>
<evidence type="ECO:0000255" key="1">
    <source>
        <dbReference type="HAMAP-Rule" id="MF_00318"/>
    </source>
</evidence>
<comment type="function">
    <text evidence="1">Catalyzes the reversible conversion of 2-phosphoglycerate (2-PG) into phosphoenolpyruvate (PEP). It is essential for the degradation of carbohydrates via glycolysis.</text>
</comment>
<comment type="catalytic activity">
    <reaction evidence="1">
        <text>(2R)-2-phosphoglycerate = phosphoenolpyruvate + H2O</text>
        <dbReference type="Rhea" id="RHEA:10164"/>
        <dbReference type="ChEBI" id="CHEBI:15377"/>
        <dbReference type="ChEBI" id="CHEBI:58289"/>
        <dbReference type="ChEBI" id="CHEBI:58702"/>
        <dbReference type="EC" id="4.2.1.11"/>
    </reaction>
</comment>
<comment type="cofactor">
    <cofactor evidence="1">
        <name>Mg(2+)</name>
        <dbReference type="ChEBI" id="CHEBI:18420"/>
    </cofactor>
    <text evidence="1">Binds a second Mg(2+) ion via substrate during catalysis.</text>
</comment>
<comment type="pathway">
    <text evidence="1">Carbohydrate degradation; glycolysis; pyruvate from D-glyceraldehyde 3-phosphate: step 4/5.</text>
</comment>
<comment type="subcellular location">
    <subcellularLocation>
        <location evidence="1">Cytoplasm</location>
    </subcellularLocation>
    <subcellularLocation>
        <location evidence="1">Secreted</location>
    </subcellularLocation>
    <subcellularLocation>
        <location evidence="1">Cell surface</location>
    </subcellularLocation>
    <text evidence="1">Fractions of enolase are present in both the cytoplasm and on the cell surface.</text>
</comment>
<comment type="similarity">
    <text evidence="1">Belongs to the enolase family.</text>
</comment>
<organism>
    <name type="scientific">Bacteroides thetaiotaomicron (strain ATCC 29148 / DSM 2079 / JCM 5827 / CCUG 10774 / NCTC 10582 / VPI-5482 / E50)</name>
    <dbReference type="NCBI Taxonomy" id="226186"/>
    <lineage>
        <taxon>Bacteria</taxon>
        <taxon>Pseudomonadati</taxon>
        <taxon>Bacteroidota</taxon>
        <taxon>Bacteroidia</taxon>
        <taxon>Bacteroidales</taxon>
        <taxon>Bacteroidaceae</taxon>
        <taxon>Bacteroides</taxon>
    </lineage>
</organism>